<comment type="function">
    <text evidence="1">NDH-1 shuttles electrons from NADH, via FMN and iron-sulfur (Fe-S) centers, to quinones in the respiratory chain. The immediate electron acceptor for the enzyme in this species is believed to be ubiquinone. Couples the redox reaction to proton translocation (for every two electrons transferred, four hydrogen ions are translocated across the cytoplasmic membrane), and thus conserves the redox energy in a proton gradient.</text>
</comment>
<comment type="catalytic activity">
    <reaction evidence="1">
        <text>a quinone + NADH + 5 H(+)(in) = a quinol + NAD(+) + 4 H(+)(out)</text>
        <dbReference type="Rhea" id="RHEA:57888"/>
        <dbReference type="ChEBI" id="CHEBI:15378"/>
        <dbReference type="ChEBI" id="CHEBI:24646"/>
        <dbReference type="ChEBI" id="CHEBI:57540"/>
        <dbReference type="ChEBI" id="CHEBI:57945"/>
        <dbReference type="ChEBI" id="CHEBI:132124"/>
    </reaction>
</comment>
<comment type="subunit">
    <text evidence="1">NDH-1 is composed of 14 different subunits. Subunits NuoB, C, D, E, F, and G constitute the peripheral sector of the complex.</text>
</comment>
<comment type="subcellular location">
    <subcellularLocation>
        <location evidence="1">Cell membrane</location>
        <topology evidence="1">Peripheral membrane protein</topology>
        <orientation evidence="1">Cytoplasmic side</orientation>
    </subcellularLocation>
</comment>
<comment type="similarity">
    <text evidence="1">Belongs to the complex I 49 kDa subunit family.</text>
</comment>
<sequence>MAIKTENFILNIGPQHPSTHGVFRLRIVLDGEVITDLEPVFGYLHRGIEKLAEGRTYLQDIPFTDRLDYLGSMTNNHAYVMAVEKLAGITVPERAEYIRVILDELQRIASHLAGLGFFLNDLGALQTPLLYMFREREKIVELFDMCSGQRLNYNYYRFGGFVQDLPEEFLPALKILLDTLPGFIDEYEQLISTNEIVLIRTKGVGVLKRDLAINSSAAGPVLRASGINWDIRRNDPYSIYNRFEFDIPIAKNGDTYDRYMIRILEMRQSVWILRQAVKDLPEGEIMGKAPKLLKPPAGEVYSRIEGPKGELGFYLVSDGTDKPYRWRVRPPCLLNLSALKDMVVGWKVADLMAIFGSIDIVMGEVDR</sequence>
<feature type="chain" id="PRO_0000371862" description="NADH-quinone oxidoreductase subunit D">
    <location>
        <begin position="1"/>
        <end position="367"/>
    </location>
</feature>
<organism>
    <name type="scientific">Dehalococcoides mccartyi (strain CBDB1)</name>
    <dbReference type="NCBI Taxonomy" id="255470"/>
    <lineage>
        <taxon>Bacteria</taxon>
        <taxon>Bacillati</taxon>
        <taxon>Chloroflexota</taxon>
        <taxon>Dehalococcoidia</taxon>
        <taxon>Dehalococcoidales</taxon>
        <taxon>Dehalococcoidaceae</taxon>
        <taxon>Dehalococcoides</taxon>
    </lineage>
</organism>
<gene>
    <name evidence="1" type="primary">nuoD</name>
    <name type="ordered locus">cbdbA877</name>
</gene>
<protein>
    <recommendedName>
        <fullName evidence="1">NADH-quinone oxidoreductase subunit D</fullName>
        <ecNumber evidence="1">7.1.1.-</ecNumber>
    </recommendedName>
    <alternativeName>
        <fullName evidence="1">NADH dehydrogenase I subunit D</fullName>
    </alternativeName>
    <alternativeName>
        <fullName evidence="1">NDH-1 subunit D</fullName>
    </alternativeName>
</protein>
<accession>Q3ZXR8</accession>
<dbReference type="EC" id="7.1.1.-" evidence="1"/>
<dbReference type="EMBL" id="AJ965256">
    <property type="protein sequence ID" value="CAI83017.1"/>
    <property type="molecule type" value="Genomic_DNA"/>
</dbReference>
<dbReference type="RefSeq" id="WP_011309368.1">
    <property type="nucleotide sequence ID" value="NC_007356.1"/>
</dbReference>
<dbReference type="SMR" id="Q3ZXR8"/>
<dbReference type="KEGG" id="deh:cbdbA877"/>
<dbReference type="HOGENOM" id="CLU_015134_1_2_0"/>
<dbReference type="Proteomes" id="UP000000433">
    <property type="component" value="Chromosome"/>
</dbReference>
<dbReference type="GO" id="GO:0005886">
    <property type="term" value="C:plasma membrane"/>
    <property type="evidence" value="ECO:0007669"/>
    <property type="project" value="UniProtKB-SubCell"/>
</dbReference>
<dbReference type="GO" id="GO:0051287">
    <property type="term" value="F:NAD binding"/>
    <property type="evidence" value="ECO:0007669"/>
    <property type="project" value="InterPro"/>
</dbReference>
<dbReference type="GO" id="GO:0050136">
    <property type="term" value="F:NADH:ubiquinone reductase (non-electrogenic) activity"/>
    <property type="evidence" value="ECO:0007669"/>
    <property type="project" value="UniProtKB-UniRule"/>
</dbReference>
<dbReference type="GO" id="GO:0048038">
    <property type="term" value="F:quinone binding"/>
    <property type="evidence" value="ECO:0007669"/>
    <property type="project" value="UniProtKB-KW"/>
</dbReference>
<dbReference type="Gene3D" id="1.10.645.10">
    <property type="entry name" value="Cytochrome-c3 Hydrogenase, chain B"/>
    <property type="match status" value="1"/>
</dbReference>
<dbReference type="HAMAP" id="MF_01358">
    <property type="entry name" value="NDH1_NuoD"/>
    <property type="match status" value="1"/>
</dbReference>
<dbReference type="InterPro" id="IPR001135">
    <property type="entry name" value="NADH_Q_OxRdtase_suD"/>
</dbReference>
<dbReference type="InterPro" id="IPR014029">
    <property type="entry name" value="NADH_UbQ_OxRdtase_49kDa_CS"/>
</dbReference>
<dbReference type="InterPro" id="IPR022885">
    <property type="entry name" value="NDH1_su_D/H"/>
</dbReference>
<dbReference type="InterPro" id="IPR029014">
    <property type="entry name" value="NiFe-Hase_large"/>
</dbReference>
<dbReference type="NCBIfam" id="NF004739">
    <property type="entry name" value="PRK06075.1"/>
    <property type="match status" value="1"/>
</dbReference>
<dbReference type="PANTHER" id="PTHR11993:SF10">
    <property type="entry name" value="NADH DEHYDROGENASE [UBIQUINONE] IRON-SULFUR PROTEIN 2, MITOCHONDRIAL"/>
    <property type="match status" value="1"/>
</dbReference>
<dbReference type="PANTHER" id="PTHR11993">
    <property type="entry name" value="NADH-UBIQUINONE OXIDOREDUCTASE 49 KDA SUBUNIT"/>
    <property type="match status" value="1"/>
</dbReference>
<dbReference type="Pfam" id="PF00346">
    <property type="entry name" value="Complex1_49kDa"/>
    <property type="match status" value="1"/>
</dbReference>
<dbReference type="SUPFAM" id="SSF56762">
    <property type="entry name" value="HydB/Nqo4-like"/>
    <property type="match status" value="1"/>
</dbReference>
<dbReference type="PROSITE" id="PS00535">
    <property type="entry name" value="COMPLEX1_49K"/>
    <property type="match status" value="1"/>
</dbReference>
<name>NUOD_DEHMC</name>
<reference key="1">
    <citation type="journal article" date="2005" name="Nat. Biotechnol.">
        <title>Genome sequence of the chlorinated compound-respiring bacterium Dehalococcoides species strain CBDB1.</title>
        <authorList>
            <person name="Kube M."/>
            <person name="Beck A."/>
            <person name="Zinder S.H."/>
            <person name="Kuhl H."/>
            <person name="Reinhardt R."/>
            <person name="Adrian L."/>
        </authorList>
    </citation>
    <scope>NUCLEOTIDE SEQUENCE [LARGE SCALE GENOMIC DNA]</scope>
    <source>
        <strain>CBDB1</strain>
    </source>
</reference>
<keyword id="KW-1003">Cell membrane</keyword>
<keyword id="KW-0472">Membrane</keyword>
<keyword id="KW-0520">NAD</keyword>
<keyword id="KW-0874">Quinone</keyword>
<keyword id="KW-1278">Translocase</keyword>
<keyword id="KW-0813">Transport</keyword>
<keyword id="KW-0830">Ubiquinone</keyword>
<evidence type="ECO:0000255" key="1">
    <source>
        <dbReference type="HAMAP-Rule" id="MF_01358"/>
    </source>
</evidence>
<proteinExistence type="inferred from homology"/>